<keyword id="KW-0687">Ribonucleoprotein</keyword>
<keyword id="KW-0689">Ribosomal protein</keyword>
<keyword id="KW-0694">RNA-binding</keyword>
<keyword id="KW-0699">rRNA-binding</keyword>
<proteinExistence type="inferred from homology"/>
<sequence length="208" mass="22178">MTKGILGKKVGMTQIFTEAGELIPVTVIEATPNVVLQVKTVETDGYNAIQVGFDDKREVLSNKPAKGHVAKANTAPKRFIREFKNVEGLEVGAEITVETFAAGDVVDVTGTSKGKGFQGVIKRHGQSRGPMAHGSRYHRRPGSMGPVAPNRVFKGKNLAGRMGGDRVTIQNLEVVQVVPEKNVILIKGNVPGAKKSLITIKSAVKAGK</sequence>
<protein>
    <recommendedName>
        <fullName evidence="1">Large ribosomal subunit protein uL3</fullName>
    </recommendedName>
    <alternativeName>
        <fullName evidence="3">50S ribosomal protein L3</fullName>
    </alternativeName>
</protein>
<evidence type="ECO:0000255" key="1">
    <source>
        <dbReference type="HAMAP-Rule" id="MF_01325"/>
    </source>
</evidence>
<evidence type="ECO:0000256" key="2">
    <source>
        <dbReference type="SAM" id="MobiDB-lite"/>
    </source>
</evidence>
<evidence type="ECO:0000305" key="3"/>
<dbReference type="EMBL" id="CP000920">
    <property type="protein sequence ID" value="ACO20933.1"/>
    <property type="molecule type" value="Genomic_DNA"/>
</dbReference>
<dbReference type="RefSeq" id="WP_000160197.1">
    <property type="nucleotide sequence ID" value="NC_012467.1"/>
</dbReference>
<dbReference type="SMR" id="C1CI97"/>
<dbReference type="GeneID" id="93738957"/>
<dbReference type="KEGG" id="spp:SPP_0260"/>
<dbReference type="HOGENOM" id="CLU_044142_4_1_9"/>
<dbReference type="GO" id="GO:0022625">
    <property type="term" value="C:cytosolic large ribosomal subunit"/>
    <property type="evidence" value="ECO:0007669"/>
    <property type="project" value="TreeGrafter"/>
</dbReference>
<dbReference type="GO" id="GO:0019843">
    <property type="term" value="F:rRNA binding"/>
    <property type="evidence" value="ECO:0007669"/>
    <property type="project" value="UniProtKB-UniRule"/>
</dbReference>
<dbReference type="GO" id="GO:0003735">
    <property type="term" value="F:structural constituent of ribosome"/>
    <property type="evidence" value="ECO:0007669"/>
    <property type="project" value="InterPro"/>
</dbReference>
<dbReference type="GO" id="GO:0006412">
    <property type="term" value="P:translation"/>
    <property type="evidence" value="ECO:0007669"/>
    <property type="project" value="UniProtKB-UniRule"/>
</dbReference>
<dbReference type="FunFam" id="2.40.30.10:FF:000004">
    <property type="entry name" value="50S ribosomal protein L3"/>
    <property type="match status" value="1"/>
</dbReference>
<dbReference type="FunFam" id="3.30.160.810:FF:000002">
    <property type="entry name" value="50S ribosomal protein L3"/>
    <property type="match status" value="1"/>
</dbReference>
<dbReference type="Gene3D" id="3.30.160.810">
    <property type="match status" value="1"/>
</dbReference>
<dbReference type="Gene3D" id="2.40.30.10">
    <property type="entry name" value="Translation factors"/>
    <property type="match status" value="1"/>
</dbReference>
<dbReference type="HAMAP" id="MF_01325_B">
    <property type="entry name" value="Ribosomal_uL3_B"/>
    <property type="match status" value="1"/>
</dbReference>
<dbReference type="InterPro" id="IPR000597">
    <property type="entry name" value="Ribosomal_uL3"/>
</dbReference>
<dbReference type="InterPro" id="IPR019927">
    <property type="entry name" value="Ribosomal_uL3_bac/org-type"/>
</dbReference>
<dbReference type="InterPro" id="IPR019926">
    <property type="entry name" value="Ribosomal_uL3_CS"/>
</dbReference>
<dbReference type="InterPro" id="IPR009000">
    <property type="entry name" value="Transl_B-barrel_sf"/>
</dbReference>
<dbReference type="NCBIfam" id="TIGR03625">
    <property type="entry name" value="L3_bact"/>
    <property type="match status" value="1"/>
</dbReference>
<dbReference type="PANTHER" id="PTHR11229">
    <property type="entry name" value="50S RIBOSOMAL PROTEIN L3"/>
    <property type="match status" value="1"/>
</dbReference>
<dbReference type="PANTHER" id="PTHR11229:SF16">
    <property type="entry name" value="LARGE RIBOSOMAL SUBUNIT PROTEIN UL3C"/>
    <property type="match status" value="1"/>
</dbReference>
<dbReference type="Pfam" id="PF00297">
    <property type="entry name" value="Ribosomal_L3"/>
    <property type="match status" value="1"/>
</dbReference>
<dbReference type="SUPFAM" id="SSF50447">
    <property type="entry name" value="Translation proteins"/>
    <property type="match status" value="1"/>
</dbReference>
<dbReference type="PROSITE" id="PS00474">
    <property type="entry name" value="RIBOSOMAL_L3"/>
    <property type="match status" value="1"/>
</dbReference>
<accession>C1CI97</accession>
<gene>
    <name evidence="1" type="primary">rplC</name>
    <name type="ordered locus">SPP_0260</name>
</gene>
<reference key="1">
    <citation type="journal article" date="2010" name="Genome Biol.">
        <title>Structure and dynamics of the pan-genome of Streptococcus pneumoniae and closely related species.</title>
        <authorList>
            <person name="Donati C."/>
            <person name="Hiller N.L."/>
            <person name="Tettelin H."/>
            <person name="Muzzi A."/>
            <person name="Croucher N.J."/>
            <person name="Angiuoli S.V."/>
            <person name="Oggioni M."/>
            <person name="Dunning Hotopp J.C."/>
            <person name="Hu F.Z."/>
            <person name="Riley D.R."/>
            <person name="Covacci A."/>
            <person name="Mitchell T.J."/>
            <person name="Bentley S.D."/>
            <person name="Kilian M."/>
            <person name="Ehrlich G.D."/>
            <person name="Rappuoli R."/>
            <person name="Moxon E.R."/>
            <person name="Masignani V."/>
        </authorList>
    </citation>
    <scope>NUCLEOTIDE SEQUENCE [LARGE SCALE GENOMIC DNA]</scope>
    <source>
        <strain>P1031</strain>
    </source>
</reference>
<organism>
    <name type="scientific">Streptococcus pneumoniae (strain P1031)</name>
    <dbReference type="NCBI Taxonomy" id="488223"/>
    <lineage>
        <taxon>Bacteria</taxon>
        <taxon>Bacillati</taxon>
        <taxon>Bacillota</taxon>
        <taxon>Bacilli</taxon>
        <taxon>Lactobacillales</taxon>
        <taxon>Streptococcaceae</taxon>
        <taxon>Streptococcus</taxon>
    </lineage>
</organism>
<feature type="chain" id="PRO_1000165910" description="Large ribosomal subunit protein uL3">
    <location>
        <begin position="1"/>
        <end position="208"/>
    </location>
</feature>
<feature type="region of interest" description="Disordered" evidence="2">
    <location>
        <begin position="116"/>
        <end position="148"/>
    </location>
</feature>
<name>RL3_STRZP</name>
<comment type="function">
    <text evidence="1">One of the primary rRNA binding proteins, it binds directly near the 3'-end of the 23S rRNA, where it nucleates assembly of the 50S subunit.</text>
</comment>
<comment type="subunit">
    <text evidence="1">Part of the 50S ribosomal subunit. Forms a cluster with proteins L14 and L19.</text>
</comment>
<comment type="similarity">
    <text evidence="1">Belongs to the universal ribosomal protein uL3 family.</text>
</comment>